<organism>
    <name type="scientific">Aliivibrio fischeri (strain ATCC 700601 / ES114)</name>
    <name type="common">Vibrio fischeri</name>
    <dbReference type="NCBI Taxonomy" id="312309"/>
    <lineage>
        <taxon>Bacteria</taxon>
        <taxon>Pseudomonadati</taxon>
        <taxon>Pseudomonadota</taxon>
        <taxon>Gammaproteobacteria</taxon>
        <taxon>Vibrionales</taxon>
        <taxon>Vibrionaceae</taxon>
        <taxon>Aliivibrio</taxon>
    </lineage>
</organism>
<protein>
    <recommendedName>
        <fullName evidence="1">Peptide chain release factor 3</fullName>
        <shortName evidence="1">RF-3</shortName>
    </recommendedName>
</protein>
<keyword id="KW-0963">Cytoplasm</keyword>
<keyword id="KW-0342">GTP-binding</keyword>
<keyword id="KW-0547">Nucleotide-binding</keyword>
<keyword id="KW-0648">Protein biosynthesis</keyword>
<keyword id="KW-1185">Reference proteome</keyword>
<comment type="function">
    <text evidence="1">Increases the formation of ribosomal termination complexes and stimulates activities of RF-1 and RF-2. It binds guanine nucleotides and has strong preference for UGA stop codons. It may interact directly with the ribosome. The stimulation of RF-1 and RF-2 is significantly reduced by GTP and GDP, but not by GMP.</text>
</comment>
<comment type="subcellular location">
    <subcellularLocation>
        <location evidence="1">Cytoplasm</location>
    </subcellularLocation>
</comment>
<comment type="similarity">
    <text evidence="1">Belongs to the TRAFAC class translation factor GTPase superfamily. Classic translation factor GTPase family. PrfC subfamily.</text>
</comment>
<accession>Q5E7K1</accession>
<name>RF3_ALIF1</name>
<evidence type="ECO:0000255" key="1">
    <source>
        <dbReference type="HAMAP-Rule" id="MF_00072"/>
    </source>
</evidence>
<sequence>MSFLQEVGKRRTFAIISHPDAGKTTITEKVLLFGNAIQKAGTVKGRGSNQHAKSDWMEMEKERGISVTTSVMQFPFNDCLVNLLDTPGHEDFSEDTYRTLTAVDSCLMVIDAAKGVEDRTRKLMEVTRLRDTPIVTFMNKLDREVRDPMEVLDEVESELGMACAPISWPIGCGKEFKGVYHIHRDETILYESGHGHEIQEVRTIKGLDNPELDATVGADLAESVREELELVMGACPEFDHELFLAGELTPVYFGTALGNFGVDHMLEGLTDWAPAPQTRQANERDVVATEDKFSGFVFKIQANMDPKHRDRIAFMRIVSGTYTQGMKMNHVRTGKNVSISDAVTFMAGDRSRAETAYAGDIIGLHNHGTIQIGDTFTQGESLKFSGIPNFAPELFRRIRLKDPLKQKQLLKGLVQLSEEGAVQVFRPLQNNDLIVGAVGVLQFDVVVARLKAEYNVEAIYEGVSVATARWVDCADGKKMDEFQRKNQANLALDGGDNLTYIAPTMVNLNLASERFPDVQFRATREH</sequence>
<gene>
    <name evidence="1" type="primary">prfC</name>
    <name type="ordered locus">VF_0500</name>
</gene>
<feature type="chain" id="PRO_0000242225" description="Peptide chain release factor 3">
    <location>
        <begin position="1"/>
        <end position="526"/>
    </location>
</feature>
<feature type="domain" description="tr-type G">
    <location>
        <begin position="8"/>
        <end position="277"/>
    </location>
</feature>
<feature type="binding site" evidence="1">
    <location>
        <begin position="17"/>
        <end position="24"/>
    </location>
    <ligand>
        <name>GTP</name>
        <dbReference type="ChEBI" id="CHEBI:37565"/>
    </ligand>
</feature>
<feature type="binding site" evidence="1">
    <location>
        <begin position="85"/>
        <end position="89"/>
    </location>
    <ligand>
        <name>GTP</name>
        <dbReference type="ChEBI" id="CHEBI:37565"/>
    </ligand>
</feature>
<feature type="binding site" evidence="1">
    <location>
        <begin position="139"/>
        <end position="142"/>
    </location>
    <ligand>
        <name>GTP</name>
        <dbReference type="ChEBI" id="CHEBI:37565"/>
    </ligand>
</feature>
<proteinExistence type="inferred from homology"/>
<dbReference type="EMBL" id="CP000020">
    <property type="protein sequence ID" value="AAW84995.1"/>
    <property type="molecule type" value="Genomic_DNA"/>
</dbReference>
<dbReference type="RefSeq" id="WP_011261269.1">
    <property type="nucleotide sequence ID" value="NC_006840.2"/>
</dbReference>
<dbReference type="RefSeq" id="YP_203883.1">
    <property type="nucleotide sequence ID" value="NC_006840.2"/>
</dbReference>
<dbReference type="SMR" id="Q5E7K1"/>
<dbReference type="STRING" id="312309.VF_0500"/>
<dbReference type="EnsemblBacteria" id="AAW84995">
    <property type="protein sequence ID" value="AAW84995"/>
    <property type="gene ID" value="VF_0500"/>
</dbReference>
<dbReference type="GeneID" id="54163137"/>
<dbReference type="KEGG" id="vfi:VF_0500"/>
<dbReference type="PATRIC" id="fig|312309.11.peg.490"/>
<dbReference type="eggNOG" id="COG4108">
    <property type="taxonomic scope" value="Bacteria"/>
</dbReference>
<dbReference type="HOGENOM" id="CLU_002794_2_1_6"/>
<dbReference type="OrthoDB" id="9804431at2"/>
<dbReference type="Proteomes" id="UP000000537">
    <property type="component" value="Chromosome I"/>
</dbReference>
<dbReference type="GO" id="GO:0005829">
    <property type="term" value="C:cytosol"/>
    <property type="evidence" value="ECO:0007669"/>
    <property type="project" value="TreeGrafter"/>
</dbReference>
<dbReference type="GO" id="GO:0005525">
    <property type="term" value="F:GTP binding"/>
    <property type="evidence" value="ECO:0007669"/>
    <property type="project" value="UniProtKB-UniRule"/>
</dbReference>
<dbReference type="GO" id="GO:0003924">
    <property type="term" value="F:GTPase activity"/>
    <property type="evidence" value="ECO:0007669"/>
    <property type="project" value="InterPro"/>
</dbReference>
<dbReference type="GO" id="GO:0097216">
    <property type="term" value="F:guanosine tetraphosphate binding"/>
    <property type="evidence" value="ECO:0007669"/>
    <property type="project" value="UniProtKB-ARBA"/>
</dbReference>
<dbReference type="GO" id="GO:0016150">
    <property type="term" value="F:translation release factor activity, codon nonspecific"/>
    <property type="evidence" value="ECO:0007669"/>
    <property type="project" value="TreeGrafter"/>
</dbReference>
<dbReference type="GO" id="GO:0016149">
    <property type="term" value="F:translation release factor activity, codon specific"/>
    <property type="evidence" value="ECO:0007669"/>
    <property type="project" value="UniProtKB-UniRule"/>
</dbReference>
<dbReference type="GO" id="GO:0006449">
    <property type="term" value="P:regulation of translational termination"/>
    <property type="evidence" value="ECO:0007669"/>
    <property type="project" value="UniProtKB-UniRule"/>
</dbReference>
<dbReference type="CDD" id="cd04169">
    <property type="entry name" value="RF3"/>
    <property type="match status" value="1"/>
</dbReference>
<dbReference type="CDD" id="cd03689">
    <property type="entry name" value="RF3_II"/>
    <property type="match status" value="1"/>
</dbReference>
<dbReference type="CDD" id="cd16259">
    <property type="entry name" value="RF3_III"/>
    <property type="match status" value="1"/>
</dbReference>
<dbReference type="FunFam" id="2.40.30.10:FF:000040">
    <property type="entry name" value="Peptide chain release factor 3"/>
    <property type="match status" value="1"/>
</dbReference>
<dbReference type="FunFam" id="3.30.70.3280:FF:000001">
    <property type="entry name" value="Peptide chain release factor 3"/>
    <property type="match status" value="1"/>
</dbReference>
<dbReference type="FunFam" id="3.40.50.300:FF:000542">
    <property type="entry name" value="Peptide chain release factor 3"/>
    <property type="match status" value="1"/>
</dbReference>
<dbReference type="Gene3D" id="3.40.50.300">
    <property type="entry name" value="P-loop containing nucleotide triphosphate hydrolases"/>
    <property type="match status" value="3"/>
</dbReference>
<dbReference type="Gene3D" id="3.30.70.3280">
    <property type="entry name" value="Peptide chain release factor 3, domain III"/>
    <property type="match status" value="1"/>
</dbReference>
<dbReference type="HAMAP" id="MF_00072">
    <property type="entry name" value="Rel_fac_3"/>
    <property type="match status" value="1"/>
</dbReference>
<dbReference type="InterPro" id="IPR053905">
    <property type="entry name" value="EF-G-like_DII"/>
</dbReference>
<dbReference type="InterPro" id="IPR035647">
    <property type="entry name" value="EFG_III/V"/>
</dbReference>
<dbReference type="InterPro" id="IPR031157">
    <property type="entry name" value="G_TR_CS"/>
</dbReference>
<dbReference type="InterPro" id="IPR027417">
    <property type="entry name" value="P-loop_NTPase"/>
</dbReference>
<dbReference type="InterPro" id="IPR004548">
    <property type="entry name" value="PrfC"/>
</dbReference>
<dbReference type="InterPro" id="IPR032090">
    <property type="entry name" value="RF3_C"/>
</dbReference>
<dbReference type="InterPro" id="IPR038467">
    <property type="entry name" value="RF3_dom_3_sf"/>
</dbReference>
<dbReference type="InterPro" id="IPR041732">
    <property type="entry name" value="RF3_GTP-bd"/>
</dbReference>
<dbReference type="InterPro" id="IPR005225">
    <property type="entry name" value="Small_GTP-bd"/>
</dbReference>
<dbReference type="InterPro" id="IPR000795">
    <property type="entry name" value="T_Tr_GTP-bd_dom"/>
</dbReference>
<dbReference type="InterPro" id="IPR009000">
    <property type="entry name" value="Transl_B-barrel_sf"/>
</dbReference>
<dbReference type="NCBIfam" id="TIGR00503">
    <property type="entry name" value="prfC"/>
    <property type="match status" value="1"/>
</dbReference>
<dbReference type="NCBIfam" id="NF001964">
    <property type="entry name" value="PRK00741.1"/>
    <property type="match status" value="1"/>
</dbReference>
<dbReference type="NCBIfam" id="TIGR00231">
    <property type="entry name" value="small_GTP"/>
    <property type="match status" value="1"/>
</dbReference>
<dbReference type="PANTHER" id="PTHR43556">
    <property type="entry name" value="PEPTIDE CHAIN RELEASE FACTOR RF3"/>
    <property type="match status" value="1"/>
</dbReference>
<dbReference type="PANTHER" id="PTHR43556:SF2">
    <property type="entry name" value="PEPTIDE CHAIN RELEASE FACTOR RF3"/>
    <property type="match status" value="1"/>
</dbReference>
<dbReference type="Pfam" id="PF22042">
    <property type="entry name" value="EF-G_D2"/>
    <property type="match status" value="1"/>
</dbReference>
<dbReference type="Pfam" id="PF00009">
    <property type="entry name" value="GTP_EFTU"/>
    <property type="match status" value="1"/>
</dbReference>
<dbReference type="Pfam" id="PF16658">
    <property type="entry name" value="RF3_C"/>
    <property type="match status" value="1"/>
</dbReference>
<dbReference type="PRINTS" id="PR00315">
    <property type="entry name" value="ELONGATNFCT"/>
</dbReference>
<dbReference type="SUPFAM" id="SSF54980">
    <property type="entry name" value="EF-G C-terminal domain-like"/>
    <property type="match status" value="1"/>
</dbReference>
<dbReference type="SUPFAM" id="SSF52540">
    <property type="entry name" value="P-loop containing nucleoside triphosphate hydrolases"/>
    <property type="match status" value="1"/>
</dbReference>
<dbReference type="SUPFAM" id="SSF50447">
    <property type="entry name" value="Translation proteins"/>
    <property type="match status" value="1"/>
</dbReference>
<dbReference type="PROSITE" id="PS00301">
    <property type="entry name" value="G_TR_1"/>
    <property type="match status" value="1"/>
</dbReference>
<dbReference type="PROSITE" id="PS51722">
    <property type="entry name" value="G_TR_2"/>
    <property type="match status" value="1"/>
</dbReference>
<reference key="1">
    <citation type="journal article" date="2005" name="Proc. Natl. Acad. Sci. U.S.A.">
        <title>Complete genome sequence of Vibrio fischeri: a symbiotic bacterium with pathogenic congeners.</title>
        <authorList>
            <person name="Ruby E.G."/>
            <person name="Urbanowski M."/>
            <person name="Campbell J."/>
            <person name="Dunn A."/>
            <person name="Faini M."/>
            <person name="Gunsalus R."/>
            <person name="Lostroh P."/>
            <person name="Lupp C."/>
            <person name="McCann J."/>
            <person name="Millikan D."/>
            <person name="Schaefer A."/>
            <person name="Stabb E."/>
            <person name="Stevens A."/>
            <person name="Visick K."/>
            <person name="Whistler C."/>
            <person name="Greenberg E.P."/>
        </authorList>
    </citation>
    <scope>NUCLEOTIDE SEQUENCE [LARGE SCALE GENOMIC DNA]</scope>
    <source>
        <strain>ATCC 700601 / ES114</strain>
    </source>
</reference>